<evidence type="ECO:0000269" key="1">
    <source>
    </source>
</evidence>
<evidence type="ECO:0000269" key="2">
    <source>
    </source>
</evidence>
<evidence type="ECO:0000303" key="3">
    <source>
    </source>
</evidence>
<evidence type="ECO:0000305" key="4"/>
<evidence type="ECO:0007829" key="5">
    <source>
        <dbReference type="PDB" id="1NA6"/>
    </source>
</evidence>
<evidence type="ECO:0007829" key="6">
    <source>
        <dbReference type="PDB" id="3HQG"/>
    </source>
</evidence>
<keyword id="KW-0002">3D-structure</keyword>
<keyword id="KW-0255">Endonuclease</keyword>
<keyword id="KW-0378">Hydrolase</keyword>
<keyword id="KW-0460">Magnesium</keyword>
<keyword id="KW-0540">Nuclease</keyword>
<keyword id="KW-0680">Restriction system</keyword>
<feature type="chain" id="PRO_0000077304" description="Type II restriction enzyme EcoRII">
    <location>
        <begin position="1"/>
        <end position="404"/>
    </location>
</feature>
<feature type="active site" evidence="4">
    <location>
        <position position="308"/>
    </location>
</feature>
<feature type="mutagenesis site" description="Abolishes cleavage activity." evidence="2">
    <original>Y</original>
    <variation>F</variation>
    <location>
        <position position="308"/>
    </location>
</feature>
<feature type="sequence conflict" description="In Ref. 2; CAA34158 and 3; CAA39344." evidence="4" ref="2 3">
    <original>VEAAHFRILKI</original>
    <variation>GRGSPLQDPEN</variation>
    <location>
        <begin position="103"/>
        <end position="113"/>
    </location>
</feature>
<feature type="sequence conflict" description="In Ref. 2; CAA34158 and 3; CAA39344." evidence="4" ref="2 3">
    <original>E</original>
    <variation>G</variation>
    <location>
        <position position="250"/>
    </location>
</feature>
<feature type="sequence conflict" description="In Ref. 2; CAA34158 and 3; CAA39344." evidence="4" ref="2 3">
    <original>A</original>
    <variation>T</variation>
    <location>
        <position position="255"/>
    </location>
</feature>
<feature type="sequence conflict" description="In Ref. 2; CAA34158 and 3; CAA39344." evidence="4" ref="2 3">
    <original>L</original>
    <variation>S</variation>
    <location>
        <position position="274"/>
    </location>
</feature>
<feature type="sequence conflict" description="In Ref. 2; CAA34158 and 3; CAA39344." evidence="4" ref="2 3">
    <original>A</original>
    <variation>T</variation>
    <location>
        <position position="290"/>
    </location>
</feature>
<feature type="sequence conflict" description="In Ref. 2; CAA34158 and 3; CAA39344." evidence="4" ref="2 3">
    <original>T</original>
    <variation>A</variation>
    <location>
        <position position="311"/>
    </location>
</feature>
<feature type="sequence conflict" description="In Ref. 2; CAA34158 and 3; CAA39344." evidence="4" ref="2 3">
    <original>Q</original>
    <variation>E</variation>
    <location>
        <position position="357"/>
    </location>
</feature>
<feature type="helix" evidence="5">
    <location>
        <begin position="5"/>
        <end position="15"/>
    </location>
</feature>
<feature type="strand" evidence="5">
    <location>
        <begin position="16"/>
        <end position="24"/>
    </location>
</feature>
<feature type="helix" evidence="5">
    <location>
        <begin position="27"/>
        <end position="30"/>
    </location>
</feature>
<feature type="strand" evidence="5">
    <location>
        <begin position="34"/>
        <end position="36"/>
    </location>
</feature>
<feature type="helix" evidence="5">
    <location>
        <begin position="44"/>
        <end position="50"/>
    </location>
</feature>
<feature type="helix" evidence="5">
    <location>
        <begin position="52"/>
        <end position="54"/>
    </location>
</feature>
<feature type="strand" evidence="5">
    <location>
        <begin position="58"/>
        <end position="61"/>
    </location>
</feature>
<feature type="strand" evidence="5">
    <location>
        <begin position="63"/>
        <end position="73"/>
    </location>
</feature>
<feature type="strand" evidence="5">
    <location>
        <begin position="78"/>
        <end position="85"/>
    </location>
</feature>
<feature type="helix" evidence="5">
    <location>
        <begin position="87"/>
        <end position="89"/>
    </location>
</feature>
<feature type="strand" evidence="5">
    <location>
        <begin position="96"/>
        <end position="100"/>
    </location>
</feature>
<feature type="helix" evidence="5">
    <location>
        <begin position="107"/>
        <end position="109"/>
    </location>
</feature>
<feature type="helix" evidence="5">
    <location>
        <begin position="111"/>
        <end position="113"/>
    </location>
</feature>
<feature type="strand" evidence="5">
    <location>
        <begin position="117"/>
        <end position="123"/>
    </location>
</feature>
<feature type="strand" evidence="5">
    <location>
        <begin position="133"/>
        <end position="138"/>
    </location>
</feature>
<feature type="helix" evidence="5">
    <location>
        <begin position="142"/>
        <end position="152"/>
    </location>
</feature>
<feature type="strand" evidence="5">
    <location>
        <begin position="161"/>
        <end position="164"/>
    </location>
</feature>
<feature type="helix" evidence="5">
    <location>
        <begin position="165"/>
        <end position="168"/>
    </location>
</feature>
<feature type="strand" evidence="5">
    <location>
        <begin position="169"/>
        <end position="172"/>
    </location>
</feature>
<feature type="helix" evidence="5">
    <location>
        <begin position="187"/>
        <end position="190"/>
    </location>
</feature>
<feature type="helix" evidence="5">
    <location>
        <begin position="196"/>
        <end position="205"/>
    </location>
</feature>
<feature type="helix" evidence="5">
    <location>
        <begin position="214"/>
        <end position="243"/>
    </location>
</feature>
<feature type="helix" evidence="5">
    <location>
        <begin position="248"/>
        <end position="265"/>
    </location>
</feature>
<feature type="strand" evidence="5">
    <location>
        <begin position="266"/>
        <end position="268"/>
    </location>
</feature>
<feature type="helix" evidence="5">
    <location>
        <begin position="269"/>
        <end position="279"/>
    </location>
</feature>
<feature type="strand" evidence="6">
    <location>
        <begin position="287"/>
        <end position="289"/>
    </location>
</feature>
<feature type="strand" evidence="6">
    <location>
        <begin position="292"/>
        <end position="295"/>
    </location>
</feature>
<feature type="strand" evidence="6">
    <location>
        <begin position="299"/>
        <end position="303"/>
    </location>
</feature>
<feature type="helix" evidence="5">
    <location>
        <begin position="305"/>
        <end position="308"/>
    </location>
</feature>
<feature type="strand" evidence="5">
    <location>
        <begin position="311"/>
        <end position="313"/>
    </location>
</feature>
<feature type="helix" evidence="5">
    <location>
        <begin position="315"/>
        <end position="317"/>
    </location>
</feature>
<feature type="strand" evidence="5">
    <location>
        <begin position="322"/>
        <end position="326"/>
    </location>
</feature>
<feature type="helix" evidence="5">
    <location>
        <begin position="332"/>
        <end position="335"/>
    </location>
</feature>
<feature type="strand" evidence="5">
    <location>
        <begin position="342"/>
        <end position="344"/>
    </location>
</feature>
<feature type="strand" evidence="5">
    <location>
        <begin position="346"/>
        <end position="348"/>
    </location>
</feature>
<feature type="helix" evidence="5">
    <location>
        <begin position="355"/>
        <end position="362"/>
    </location>
</feature>
<feature type="turn" evidence="5">
    <location>
        <begin position="363"/>
        <end position="365"/>
    </location>
</feature>
<feature type="strand" evidence="6">
    <location>
        <begin position="366"/>
        <end position="369"/>
    </location>
</feature>
<feature type="helix" evidence="5">
    <location>
        <begin position="372"/>
        <end position="375"/>
    </location>
</feature>
<feature type="turn" evidence="5">
    <location>
        <begin position="380"/>
        <end position="382"/>
    </location>
</feature>
<feature type="helix" evidence="5">
    <location>
        <begin position="383"/>
        <end position="385"/>
    </location>
</feature>
<feature type="helix" evidence="5">
    <location>
        <begin position="389"/>
        <end position="396"/>
    </location>
</feature>
<feature type="turn" evidence="6">
    <location>
        <begin position="400"/>
        <end position="402"/>
    </location>
</feature>
<organism>
    <name type="scientific">Escherichia coli</name>
    <dbReference type="NCBI Taxonomy" id="562"/>
    <lineage>
        <taxon>Bacteria</taxon>
        <taxon>Pseudomonadati</taxon>
        <taxon>Pseudomonadota</taxon>
        <taxon>Gammaproteobacteria</taxon>
        <taxon>Enterobacterales</taxon>
        <taxon>Enterobacteriaceae</taxon>
        <taxon>Escherichia</taxon>
    </lineage>
</organism>
<comment type="function">
    <text evidence="1 3">An E and P subtype restriction enzyme that recognizes the double-stranded sequence 5'-CCWGG-3' and cleaves before C-1.</text>
</comment>
<comment type="catalytic activity">
    <reaction evidence="1">
        <text>Endonucleolytic cleavage of DNA to give specific double-stranded fragments with terminal 5'-phosphates.</text>
        <dbReference type="EC" id="3.1.21.4"/>
    </reaction>
</comment>
<comment type="cofactor">
    <cofactor>
        <name>Mg(2+)</name>
        <dbReference type="ChEBI" id="CHEBI:18420"/>
    </cofactor>
</comment>
<comment type="subunit">
    <text>Homodimer.</text>
</comment>
<comment type="sequence caution" evidence="4">
    <conflict type="erroneous initiation">
        <sequence resource="EMBL-CDS" id="CAA34158"/>
    </conflict>
    <text>Truncated N-terminus.</text>
</comment>
<comment type="sequence caution" evidence="4">
    <conflict type="erroneous initiation">
        <sequence resource="EMBL-CDS" id="CAA39344"/>
    </conflict>
    <text>Truncated N-terminus.</text>
</comment>
<sequence>MLMSVFHNWLLEIACENYFVYIKRLSANDTGATGGHQVGLYIPSGIVEKLFPSINHTRELNPSVFLTAHVSSHDCPDSEARAIYYNSRHFGKTRNEKRITRWVEAAHFRILKITGALTLLAFKLDEQGGDCKEVNIWVCASTDEEDVIETAIGEVIPGALISGPAGQILGGLSLQQAPVNHKYILPEDWHLRFPSGSEIIQYAASHYVKNSLDPDEQLLDRRRVEYDIFLLVEELHVLDIIRKGFGSVDEFIALANSVSNRRKSRAGKSLELHLEHLFIEHGLRHFATQAITEGNKKPDFLFPSAGAYHDTEFPVENLRMLAVKTTCKDRWRQILNEADKIHQVHLFTLQEGVSLAQYREMRESGVRLVVPSSLHKKYPEAVRAELMTLGAFIAELTGLYADIP</sequence>
<protein>
    <recommendedName>
        <fullName evidence="3">Type II restriction enzyme EcoRII</fullName>
        <shortName>R.EcoRII</shortName>
        <ecNumber evidence="1">3.1.21.4</ecNumber>
    </recommendedName>
    <alternativeName>
        <fullName>Endonuclease EcoRII</fullName>
    </alternativeName>
    <alternativeName>
        <fullName>Type-2 restriction enzyme EcoRII</fullName>
    </alternativeName>
</protein>
<dbReference type="EC" id="3.1.21.4" evidence="1"/>
<dbReference type="EMBL" id="M26404">
    <property type="protein sequence ID" value="AAC15081.1"/>
    <property type="molecule type" value="Genomic_DNA"/>
</dbReference>
<dbReference type="EMBL" id="X16025">
    <property type="protein sequence ID" value="CAA34158.1"/>
    <property type="status" value="ALT_INIT"/>
    <property type="molecule type" value="Genomic_DNA"/>
</dbReference>
<dbReference type="EMBL" id="X55817">
    <property type="protein sequence ID" value="CAA39344.1"/>
    <property type="status" value="ALT_INIT"/>
    <property type="molecule type" value="Genomic_DNA"/>
</dbReference>
<dbReference type="PIR" id="A34919">
    <property type="entry name" value="A34919"/>
</dbReference>
<dbReference type="PDB" id="1NA6">
    <property type="method" value="X-ray"/>
    <property type="resolution" value="2.10 A"/>
    <property type="chains" value="A/B=3-404"/>
</dbReference>
<dbReference type="PDB" id="3HQG">
    <property type="method" value="X-ray"/>
    <property type="resolution" value="2.60 A"/>
    <property type="chains" value="A=183-404"/>
</dbReference>
<dbReference type="PDBsum" id="1NA6"/>
<dbReference type="PDBsum" id="3HQG"/>
<dbReference type="SMR" id="P14633"/>
<dbReference type="REBASE" id="203802">
    <property type="entry name" value="Keu1446ORF816P"/>
</dbReference>
<dbReference type="REBASE" id="233042">
    <property type="entry name" value="RspNXC24ORF2358P"/>
</dbReference>
<dbReference type="REBASE" id="994">
    <property type="entry name" value="EcoRII"/>
</dbReference>
<dbReference type="BRENDA" id="3.1.21.4">
    <property type="organism ID" value="2026"/>
</dbReference>
<dbReference type="EvolutionaryTrace" id="P14633"/>
<dbReference type="PRO" id="PR:P14633"/>
<dbReference type="GO" id="GO:0003677">
    <property type="term" value="F:DNA binding"/>
    <property type="evidence" value="ECO:0007669"/>
    <property type="project" value="InterPro"/>
</dbReference>
<dbReference type="GO" id="GO:0009036">
    <property type="term" value="F:type II site-specific deoxyribonuclease activity"/>
    <property type="evidence" value="ECO:0007669"/>
    <property type="project" value="UniProtKB-EC"/>
</dbReference>
<dbReference type="GO" id="GO:0009307">
    <property type="term" value="P:DNA restriction-modification system"/>
    <property type="evidence" value="ECO:0007669"/>
    <property type="project" value="UniProtKB-KW"/>
</dbReference>
<dbReference type="CDD" id="cd22322">
    <property type="entry name" value="EcoRII-like"/>
    <property type="match status" value="1"/>
</dbReference>
<dbReference type="CDD" id="cd10016">
    <property type="entry name" value="EcoRII_N"/>
    <property type="match status" value="1"/>
</dbReference>
<dbReference type="Gene3D" id="3.40.91.80">
    <property type="match status" value="1"/>
</dbReference>
<dbReference type="Gene3D" id="2.40.330.10">
    <property type="entry name" value="DNA-binding pseudobarrel domain"/>
    <property type="match status" value="1"/>
</dbReference>
<dbReference type="InterPro" id="IPR015300">
    <property type="entry name" value="DNA-bd_pseudobarrel_sf"/>
</dbReference>
<dbReference type="InterPro" id="IPR038365">
    <property type="entry name" value="EcoRII_C_sf"/>
</dbReference>
<dbReference type="InterPro" id="IPR023372">
    <property type="entry name" value="Rest_endonuc_II_EcoRII_N"/>
</dbReference>
<dbReference type="InterPro" id="IPR011335">
    <property type="entry name" value="Restrct_endonuc-II-like"/>
</dbReference>
<dbReference type="InterPro" id="IPR015109">
    <property type="entry name" value="Restrct_endonuc_II_EcoRII_C"/>
</dbReference>
<dbReference type="Pfam" id="PF09019">
    <property type="entry name" value="EcoRII-C"/>
    <property type="match status" value="1"/>
</dbReference>
<dbReference type="Pfam" id="PF09217">
    <property type="entry name" value="EcoRII-N"/>
    <property type="match status" value="1"/>
</dbReference>
<dbReference type="SUPFAM" id="SSF101936">
    <property type="entry name" value="DNA-binding pseudobarrel domain"/>
    <property type="match status" value="1"/>
</dbReference>
<dbReference type="SUPFAM" id="SSF52980">
    <property type="entry name" value="Restriction endonuclease-like"/>
    <property type="match status" value="1"/>
</dbReference>
<reference key="1">
    <citation type="journal article" date="1990" name="J. Biol. Chem.">
        <title>Primary sequence of the EcoRII endonuclease and properties of its fusions with beta-galactosidase.</title>
        <authorList>
            <person name="Bhagwat A.S."/>
            <person name="Johnson B."/>
            <person name="Weule K."/>
            <person name="Roberts R.J."/>
        </authorList>
    </citation>
    <scope>NUCLEOTIDE SEQUENCE [GENOMIC DNA]</scope>
    <scope>FUNCTION</scope>
    <scope>CATALYTIC ACTIVITY</scope>
</reference>
<reference key="2">
    <citation type="journal article" date="1989" name="Biochim. Biophys. Acta">
        <title>Nucleotide sequence of the EcoRII restriction endonuclease gene.</title>
        <authorList>
            <person name="Kossykh V.G."/>
            <person name="Repyk A.V."/>
            <person name="Kaliman A.V."/>
            <person name="Bur'Yanov Y.I."/>
        </authorList>
    </citation>
    <scope>NUCLEOTIDE SEQUENCE [GENOMIC DNA]</scope>
    <source>
        <strain>R245</strain>
    </source>
</reference>
<reference key="3">
    <citation type="journal article" date="1989" name="Dokl. Akad. Nauk SSSR">
        <title>Primary structure of the gene of restriction endonuclease EcoRII.</title>
        <authorList>
            <person name="Kossykh V.G."/>
            <person name="Repyk A.V."/>
            <person name="Kaliman A.V."/>
            <person name="Bur'Yanov Y.I."/>
            <person name="Baev A.A."/>
        </authorList>
    </citation>
    <scope>NUCLEOTIDE SEQUENCE [GENOMIC DNA]</scope>
    <source>
        <strain>R245</strain>
    </source>
</reference>
<reference key="4">
    <citation type="journal article" date="1993" name="Nucleic Acids Res.">
        <title>Changing endonuclease EcoRII Tyr308 to Phe abolishes cleavage but not recognition: possible homology with the Int-family of recombinases.</title>
        <authorList>
            <person name="Topal M.D."/>
            <person name="Conrad M."/>
        </authorList>
    </citation>
    <scope>MUTAGENESIS OF TYR-308</scope>
</reference>
<reference key="5">
    <citation type="journal article" date="2003" name="Nucleic Acids Res.">
        <title>A nomenclature for restriction enzymes, DNA methyltransferases, homing endonucleases and their genes.</title>
        <authorList>
            <person name="Roberts R.J."/>
            <person name="Belfort M."/>
            <person name="Bestor T."/>
            <person name="Bhagwat A.S."/>
            <person name="Bickle T.A."/>
            <person name="Bitinaite J."/>
            <person name="Blumenthal R.M."/>
            <person name="Degtyarev S.K."/>
            <person name="Dryden D.T."/>
            <person name="Dybvig K."/>
            <person name="Firman K."/>
            <person name="Gromova E.S."/>
            <person name="Gumport R.I."/>
            <person name="Halford S.E."/>
            <person name="Hattman S."/>
            <person name="Heitman J."/>
            <person name="Hornby D.P."/>
            <person name="Janulaitis A."/>
            <person name="Jeltsch A."/>
            <person name="Josephsen J."/>
            <person name="Kiss A."/>
            <person name="Klaenhammer T.R."/>
            <person name="Kobayashi I."/>
            <person name="Kong H."/>
            <person name="Krueger D.H."/>
            <person name="Lacks S."/>
            <person name="Marinus M.G."/>
            <person name="Miyahara M."/>
            <person name="Morgan R.D."/>
            <person name="Murray N.E."/>
            <person name="Nagaraja V."/>
            <person name="Piekarowicz A."/>
            <person name="Pingoud A."/>
            <person name="Raleigh E."/>
            <person name="Rao D.N."/>
            <person name="Reich N."/>
            <person name="Repin V.E."/>
            <person name="Selker E.U."/>
            <person name="Shaw P.C."/>
            <person name="Stein D.C."/>
            <person name="Stoddard B.L."/>
            <person name="Szybalski W."/>
            <person name="Trautner T.A."/>
            <person name="Van Etten J.L."/>
            <person name="Vitor J.M."/>
            <person name="Wilson G.G."/>
            <person name="Xu S.Y."/>
        </authorList>
    </citation>
    <scope>NOMENCLATURE</scope>
    <scope>SUBTYPES</scope>
</reference>
<proteinExistence type="evidence at protein level"/>
<gene>
    <name type="primary">ecoRIIR</name>
</gene>
<name>T2E2_ECOLX</name>
<accession>P14633</accession>